<sequence>MRCPKCGGSKSSVIDSRQAEDGNTIRRRRECEDCQHRFTTYERVEERTLVVVKKDGTREQFSRDKIFNGIIRSAQKRPVSSDEIEALVNRIEQKVRSSSDNEISSDFIGNLVMDELAELDEITYVRFASVYRSFKDVGELESLLQQITKGVKKKREE</sequence>
<evidence type="ECO:0000255" key="1">
    <source>
        <dbReference type="HAMAP-Rule" id="MF_00440"/>
    </source>
</evidence>
<evidence type="ECO:0000256" key="2">
    <source>
        <dbReference type="SAM" id="MobiDB-lite"/>
    </source>
</evidence>
<accession>A8AVL4</accession>
<reference key="1">
    <citation type="journal article" date="2007" name="J. Bacteriol.">
        <title>Genome-wide transcriptional changes in Streptococcus gordonii in response to competence signaling peptide.</title>
        <authorList>
            <person name="Vickerman M.M."/>
            <person name="Iobst S."/>
            <person name="Jesionowski A.M."/>
            <person name="Gill S.R."/>
        </authorList>
    </citation>
    <scope>NUCLEOTIDE SEQUENCE [LARGE SCALE GENOMIC DNA]</scope>
    <source>
        <strain>Challis / ATCC 35105 / BCRC 15272 / CH1 / DL1 / V288</strain>
    </source>
</reference>
<dbReference type="EMBL" id="CP000725">
    <property type="protein sequence ID" value="ABV09767.1"/>
    <property type="molecule type" value="Genomic_DNA"/>
</dbReference>
<dbReference type="RefSeq" id="WP_012000014.1">
    <property type="nucleotide sequence ID" value="NC_009785.1"/>
</dbReference>
<dbReference type="SMR" id="A8AVL4"/>
<dbReference type="STRING" id="467705.SGO_0508"/>
<dbReference type="GeneID" id="93788336"/>
<dbReference type="KEGG" id="sgo:SGO_0508"/>
<dbReference type="eggNOG" id="COG1327">
    <property type="taxonomic scope" value="Bacteria"/>
</dbReference>
<dbReference type="HOGENOM" id="CLU_108412_0_0_9"/>
<dbReference type="Proteomes" id="UP000001131">
    <property type="component" value="Chromosome"/>
</dbReference>
<dbReference type="GO" id="GO:0005524">
    <property type="term" value="F:ATP binding"/>
    <property type="evidence" value="ECO:0007669"/>
    <property type="project" value="UniProtKB-KW"/>
</dbReference>
<dbReference type="GO" id="GO:0003677">
    <property type="term" value="F:DNA binding"/>
    <property type="evidence" value="ECO:0007669"/>
    <property type="project" value="UniProtKB-KW"/>
</dbReference>
<dbReference type="GO" id="GO:0008270">
    <property type="term" value="F:zinc ion binding"/>
    <property type="evidence" value="ECO:0007669"/>
    <property type="project" value="UniProtKB-UniRule"/>
</dbReference>
<dbReference type="GO" id="GO:0045892">
    <property type="term" value="P:negative regulation of DNA-templated transcription"/>
    <property type="evidence" value="ECO:0007669"/>
    <property type="project" value="UniProtKB-UniRule"/>
</dbReference>
<dbReference type="HAMAP" id="MF_00440">
    <property type="entry name" value="NrdR"/>
    <property type="match status" value="1"/>
</dbReference>
<dbReference type="InterPro" id="IPR005144">
    <property type="entry name" value="ATP-cone_dom"/>
</dbReference>
<dbReference type="InterPro" id="IPR055173">
    <property type="entry name" value="NrdR-like_N"/>
</dbReference>
<dbReference type="InterPro" id="IPR003796">
    <property type="entry name" value="RNR_NrdR-like"/>
</dbReference>
<dbReference type="NCBIfam" id="TIGR00244">
    <property type="entry name" value="transcriptional regulator NrdR"/>
    <property type="match status" value="1"/>
</dbReference>
<dbReference type="PANTHER" id="PTHR30455">
    <property type="entry name" value="TRANSCRIPTIONAL REPRESSOR NRDR"/>
    <property type="match status" value="1"/>
</dbReference>
<dbReference type="PANTHER" id="PTHR30455:SF2">
    <property type="entry name" value="TRANSCRIPTIONAL REPRESSOR NRDR"/>
    <property type="match status" value="1"/>
</dbReference>
<dbReference type="Pfam" id="PF03477">
    <property type="entry name" value="ATP-cone"/>
    <property type="match status" value="1"/>
</dbReference>
<dbReference type="Pfam" id="PF22811">
    <property type="entry name" value="Zn_ribbon_NrdR"/>
    <property type="match status" value="1"/>
</dbReference>
<dbReference type="PROSITE" id="PS51161">
    <property type="entry name" value="ATP_CONE"/>
    <property type="match status" value="1"/>
</dbReference>
<organism>
    <name type="scientific">Streptococcus gordonii (strain Challis / ATCC 35105 / BCRC 15272 / CH1 / DL1 / V288)</name>
    <dbReference type="NCBI Taxonomy" id="467705"/>
    <lineage>
        <taxon>Bacteria</taxon>
        <taxon>Bacillati</taxon>
        <taxon>Bacillota</taxon>
        <taxon>Bacilli</taxon>
        <taxon>Lactobacillales</taxon>
        <taxon>Streptococcaceae</taxon>
        <taxon>Streptococcus</taxon>
    </lineage>
</organism>
<protein>
    <recommendedName>
        <fullName evidence="1">Transcriptional repressor NrdR</fullName>
    </recommendedName>
</protein>
<comment type="function">
    <text evidence="1">Negatively regulates transcription of bacterial ribonucleotide reductase nrd genes and operons by binding to NrdR-boxes.</text>
</comment>
<comment type="cofactor">
    <cofactor evidence="1">
        <name>Zn(2+)</name>
        <dbReference type="ChEBI" id="CHEBI:29105"/>
    </cofactor>
    <text evidence="1">Binds 1 zinc ion.</text>
</comment>
<comment type="similarity">
    <text evidence="1">Belongs to the NrdR family.</text>
</comment>
<proteinExistence type="inferred from homology"/>
<feature type="chain" id="PRO_1000080842" description="Transcriptional repressor NrdR">
    <location>
        <begin position="1"/>
        <end position="157"/>
    </location>
</feature>
<feature type="domain" description="ATP-cone" evidence="1">
    <location>
        <begin position="49"/>
        <end position="139"/>
    </location>
</feature>
<feature type="zinc finger region" evidence="1">
    <location>
        <begin position="3"/>
        <end position="34"/>
    </location>
</feature>
<feature type="region of interest" description="Disordered" evidence="2">
    <location>
        <begin position="1"/>
        <end position="26"/>
    </location>
</feature>
<feature type="compositionally biased region" description="Basic and acidic residues" evidence="2">
    <location>
        <begin position="17"/>
        <end position="26"/>
    </location>
</feature>
<keyword id="KW-0067">ATP-binding</keyword>
<keyword id="KW-0238">DNA-binding</keyword>
<keyword id="KW-0479">Metal-binding</keyword>
<keyword id="KW-0547">Nucleotide-binding</keyword>
<keyword id="KW-1185">Reference proteome</keyword>
<keyword id="KW-0678">Repressor</keyword>
<keyword id="KW-0804">Transcription</keyword>
<keyword id="KW-0805">Transcription regulation</keyword>
<keyword id="KW-0862">Zinc</keyword>
<keyword id="KW-0863">Zinc-finger</keyword>
<gene>
    <name evidence="1" type="primary">nrdR</name>
    <name type="ordered locus">SGO_0508</name>
</gene>
<name>NRDR_STRGC</name>